<evidence type="ECO:0000255" key="1">
    <source>
        <dbReference type="HAMAP-Rule" id="MF_00015"/>
    </source>
</evidence>
<gene>
    <name evidence="1" type="primary">lexA</name>
    <name type="ordered locus">CPS_0237</name>
</gene>
<name>LEXA_COLP3</name>
<organism>
    <name type="scientific">Colwellia psychrerythraea (strain 34H / ATCC BAA-681)</name>
    <name type="common">Vibrio psychroerythus</name>
    <dbReference type="NCBI Taxonomy" id="167879"/>
    <lineage>
        <taxon>Bacteria</taxon>
        <taxon>Pseudomonadati</taxon>
        <taxon>Pseudomonadota</taxon>
        <taxon>Gammaproteobacteria</taxon>
        <taxon>Alteromonadales</taxon>
        <taxon>Colwelliaceae</taxon>
        <taxon>Colwellia</taxon>
    </lineage>
</organism>
<comment type="function">
    <text evidence="1">Represses a number of genes involved in the response to DNA damage (SOS response), including recA and lexA. In the presence of single-stranded DNA, RecA interacts with LexA causing an autocatalytic cleavage which disrupts the DNA-binding part of LexA, leading to derepression of the SOS regulon and eventually DNA repair.</text>
</comment>
<comment type="catalytic activity">
    <reaction evidence="1">
        <text>Hydrolysis of Ala-|-Gly bond in repressor LexA.</text>
        <dbReference type="EC" id="3.4.21.88"/>
    </reaction>
</comment>
<comment type="subunit">
    <text evidence="1">Homodimer.</text>
</comment>
<comment type="similarity">
    <text evidence="1">Belongs to the peptidase S24 family.</text>
</comment>
<dbReference type="EC" id="3.4.21.88" evidence="1"/>
<dbReference type="EMBL" id="CP000083">
    <property type="protein sequence ID" value="AAZ27640.1"/>
    <property type="molecule type" value="Genomic_DNA"/>
</dbReference>
<dbReference type="RefSeq" id="WP_011041111.1">
    <property type="nucleotide sequence ID" value="NC_003910.7"/>
</dbReference>
<dbReference type="SMR" id="Q48AA9"/>
<dbReference type="STRING" id="167879.CPS_0237"/>
<dbReference type="MEROPS" id="S24.001"/>
<dbReference type="KEGG" id="cps:CPS_0237"/>
<dbReference type="eggNOG" id="COG1974">
    <property type="taxonomic scope" value="Bacteria"/>
</dbReference>
<dbReference type="HOGENOM" id="CLU_066192_45_3_6"/>
<dbReference type="Proteomes" id="UP000000547">
    <property type="component" value="Chromosome"/>
</dbReference>
<dbReference type="GO" id="GO:0003677">
    <property type="term" value="F:DNA binding"/>
    <property type="evidence" value="ECO:0007669"/>
    <property type="project" value="UniProtKB-UniRule"/>
</dbReference>
<dbReference type="GO" id="GO:0004252">
    <property type="term" value="F:serine-type endopeptidase activity"/>
    <property type="evidence" value="ECO:0007669"/>
    <property type="project" value="UniProtKB-UniRule"/>
</dbReference>
<dbReference type="GO" id="GO:0006281">
    <property type="term" value="P:DNA repair"/>
    <property type="evidence" value="ECO:0007669"/>
    <property type="project" value="UniProtKB-UniRule"/>
</dbReference>
<dbReference type="GO" id="GO:0006260">
    <property type="term" value="P:DNA replication"/>
    <property type="evidence" value="ECO:0007669"/>
    <property type="project" value="UniProtKB-UniRule"/>
</dbReference>
<dbReference type="GO" id="GO:0045892">
    <property type="term" value="P:negative regulation of DNA-templated transcription"/>
    <property type="evidence" value="ECO:0007669"/>
    <property type="project" value="UniProtKB-UniRule"/>
</dbReference>
<dbReference type="GO" id="GO:0006508">
    <property type="term" value="P:proteolysis"/>
    <property type="evidence" value="ECO:0007669"/>
    <property type="project" value="InterPro"/>
</dbReference>
<dbReference type="GO" id="GO:0009432">
    <property type="term" value="P:SOS response"/>
    <property type="evidence" value="ECO:0007669"/>
    <property type="project" value="UniProtKB-UniRule"/>
</dbReference>
<dbReference type="CDD" id="cd06529">
    <property type="entry name" value="S24_LexA-like"/>
    <property type="match status" value="1"/>
</dbReference>
<dbReference type="FunFam" id="1.10.10.10:FF:000009">
    <property type="entry name" value="LexA repressor"/>
    <property type="match status" value="1"/>
</dbReference>
<dbReference type="FunFam" id="2.10.109.10:FF:000001">
    <property type="entry name" value="LexA repressor"/>
    <property type="match status" value="1"/>
</dbReference>
<dbReference type="Gene3D" id="2.10.109.10">
    <property type="entry name" value="Umud Fragment, subunit A"/>
    <property type="match status" value="1"/>
</dbReference>
<dbReference type="Gene3D" id="1.10.10.10">
    <property type="entry name" value="Winged helix-like DNA-binding domain superfamily/Winged helix DNA-binding domain"/>
    <property type="match status" value="1"/>
</dbReference>
<dbReference type="HAMAP" id="MF_00015">
    <property type="entry name" value="LexA"/>
    <property type="match status" value="1"/>
</dbReference>
<dbReference type="InterPro" id="IPR006200">
    <property type="entry name" value="LexA"/>
</dbReference>
<dbReference type="InterPro" id="IPR039418">
    <property type="entry name" value="LexA-like"/>
</dbReference>
<dbReference type="InterPro" id="IPR036286">
    <property type="entry name" value="LexA/Signal_pep-like_sf"/>
</dbReference>
<dbReference type="InterPro" id="IPR006199">
    <property type="entry name" value="LexA_DNA-bd_dom"/>
</dbReference>
<dbReference type="InterPro" id="IPR050077">
    <property type="entry name" value="LexA_repressor"/>
</dbReference>
<dbReference type="InterPro" id="IPR006197">
    <property type="entry name" value="Peptidase_S24_LexA"/>
</dbReference>
<dbReference type="InterPro" id="IPR015927">
    <property type="entry name" value="Peptidase_S24_S26A/B/C"/>
</dbReference>
<dbReference type="InterPro" id="IPR036388">
    <property type="entry name" value="WH-like_DNA-bd_sf"/>
</dbReference>
<dbReference type="InterPro" id="IPR036390">
    <property type="entry name" value="WH_DNA-bd_sf"/>
</dbReference>
<dbReference type="NCBIfam" id="TIGR00498">
    <property type="entry name" value="lexA"/>
    <property type="match status" value="1"/>
</dbReference>
<dbReference type="PANTHER" id="PTHR33516">
    <property type="entry name" value="LEXA REPRESSOR"/>
    <property type="match status" value="1"/>
</dbReference>
<dbReference type="PANTHER" id="PTHR33516:SF2">
    <property type="entry name" value="LEXA REPRESSOR-RELATED"/>
    <property type="match status" value="1"/>
</dbReference>
<dbReference type="Pfam" id="PF01726">
    <property type="entry name" value="LexA_DNA_bind"/>
    <property type="match status" value="1"/>
</dbReference>
<dbReference type="Pfam" id="PF00717">
    <property type="entry name" value="Peptidase_S24"/>
    <property type="match status" value="1"/>
</dbReference>
<dbReference type="PRINTS" id="PR00726">
    <property type="entry name" value="LEXASERPTASE"/>
</dbReference>
<dbReference type="SUPFAM" id="SSF51306">
    <property type="entry name" value="LexA/Signal peptidase"/>
    <property type="match status" value="1"/>
</dbReference>
<dbReference type="SUPFAM" id="SSF46785">
    <property type="entry name" value="Winged helix' DNA-binding domain"/>
    <property type="match status" value="1"/>
</dbReference>
<protein>
    <recommendedName>
        <fullName evidence="1">LexA repressor</fullName>
        <ecNumber evidence="1">3.4.21.88</ecNumber>
    </recommendedName>
</protein>
<proteinExistence type="inferred from homology"/>
<accession>Q48AA9</accession>
<feature type="chain" id="PRO_0000322726" description="LexA repressor">
    <location>
        <begin position="1"/>
        <end position="211"/>
    </location>
</feature>
<feature type="DNA-binding region" description="H-T-H motif" evidence="1">
    <location>
        <begin position="35"/>
        <end position="55"/>
    </location>
</feature>
<feature type="active site" description="For autocatalytic cleavage activity" evidence="1">
    <location>
        <position position="128"/>
    </location>
</feature>
<feature type="active site" description="For autocatalytic cleavage activity" evidence="1">
    <location>
        <position position="165"/>
    </location>
</feature>
<feature type="site" description="Cleavage; by autolysis" evidence="1">
    <location>
        <begin position="93"/>
        <end position="94"/>
    </location>
</feature>
<sequence length="211" mass="23540">MIDSTTELRPLTKRQQQIYDLIKAKIQDTGMPPTRAEIANFFGFKSANAAEEHLKALAKKGYIEMLAGTSRGIRLVEEMLEAEGLPLIGRVAAGEPILAQEHIEEHYKMDGNLFHPAADYLLRVNGESMKDIGILDGDLLAVHQTTEVQNGQVVVARVENDVTVKRFKREGNVVYLHAENEDFSPIKVDLANQEFNIEGIAVGIIRSGRWM</sequence>
<reference key="1">
    <citation type="journal article" date="2005" name="Proc. Natl. Acad. Sci. U.S.A.">
        <title>The psychrophilic lifestyle as revealed by the genome sequence of Colwellia psychrerythraea 34H through genomic and proteomic analyses.</title>
        <authorList>
            <person name="Methe B.A."/>
            <person name="Nelson K.E."/>
            <person name="Deming J.W."/>
            <person name="Momen B."/>
            <person name="Melamud E."/>
            <person name="Zhang X."/>
            <person name="Moult J."/>
            <person name="Madupu R."/>
            <person name="Nelson W.C."/>
            <person name="Dodson R.J."/>
            <person name="Brinkac L.M."/>
            <person name="Daugherty S.C."/>
            <person name="Durkin A.S."/>
            <person name="DeBoy R.T."/>
            <person name="Kolonay J.F."/>
            <person name="Sullivan S.A."/>
            <person name="Zhou L."/>
            <person name="Davidsen T.M."/>
            <person name="Wu M."/>
            <person name="Huston A.L."/>
            <person name="Lewis M."/>
            <person name="Weaver B."/>
            <person name="Weidman J.F."/>
            <person name="Khouri H."/>
            <person name="Utterback T.R."/>
            <person name="Feldblyum T.V."/>
            <person name="Fraser C.M."/>
        </authorList>
    </citation>
    <scope>NUCLEOTIDE SEQUENCE [LARGE SCALE GENOMIC DNA]</scope>
    <source>
        <strain>34H / ATCC BAA-681</strain>
    </source>
</reference>
<keyword id="KW-0068">Autocatalytic cleavage</keyword>
<keyword id="KW-0227">DNA damage</keyword>
<keyword id="KW-0234">DNA repair</keyword>
<keyword id="KW-0235">DNA replication</keyword>
<keyword id="KW-0238">DNA-binding</keyword>
<keyword id="KW-0378">Hydrolase</keyword>
<keyword id="KW-0678">Repressor</keyword>
<keyword id="KW-0742">SOS response</keyword>
<keyword id="KW-0804">Transcription</keyword>
<keyword id="KW-0805">Transcription regulation</keyword>